<organism>
    <name type="scientific">Mycolicibacterium paratuberculosis (strain ATCC BAA-968 / K-10)</name>
    <name type="common">Mycobacterium paratuberculosis</name>
    <dbReference type="NCBI Taxonomy" id="262316"/>
    <lineage>
        <taxon>Bacteria</taxon>
        <taxon>Bacillati</taxon>
        <taxon>Actinomycetota</taxon>
        <taxon>Actinomycetes</taxon>
        <taxon>Mycobacteriales</taxon>
        <taxon>Mycobacteriaceae</taxon>
        <taxon>Mycobacterium</taxon>
        <taxon>Mycobacterium avium complex (MAC)</taxon>
    </lineage>
</organism>
<gene>
    <name evidence="1" type="primary">rpmE</name>
    <name type="ordered locus">MAP_2463c</name>
</gene>
<proteinExistence type="inferred from homology"/>
<name>RL31_MYCPA</name>
<accession>Q73X47</accession>
<protein>
    <recommendedName>
        <fullName evidence="1">Large ribosomal subunit protein bL31</fullName>
    </recommendedName>
    <alternativeName>
        <fullName evidence="2">50S ribosomal protein L31</fullName>
    </alternativeName>
</protein>
<dbReference type="EMBL" id="AE016958">
    <property type="protein sequence ID" value="AAS04780.1"/>
    <property type="molecule type" value="Genomic_DNA"/>
</dbReference>
<dbReference type="RefSeq" id="WP_003873232.1">
    <property type="nucleotide sequence ID" value="NZ_CP106873.1"/>
</dbReference>
<dbReference type="SMR" id="Q73X47"/>
<dbReference type="STRING" id="262316.MAP_2463c"/>
<dbReference type="GeneID" id="75269277"/>
<dbReference type="KEGG" id="mpa:MAP_2463c"/>
<dbReference type="eggNOG" id="COG0254">
    <property type="taxonomic scope" value="Bacteria"/>
</dbReference>
<dbReference type="HOGENOM" id="CLU_114306_4_0_11"/>
<dbReference type="Proteomes" id="UP000000580">
    <property type="component" value="Chromosome"/>
</dbReference>
<dbReference type="GO" id="GO:1990904">
    <property type="term" value="C:ribonucleoprotein complex"/>
    <property type="evidence" value="ECO:0007669"/>
    <property type="project" value="UniProtKB-KW"/>
</dbReference>
<dbReference type="GO" id="GO:0005840">
    <property type="term" value="C:ribosome"/>
    <property type="evidence" value="ECO:0007669"/>
    <property type="project" value="UniProtKB-KW"/>
</dbReference>
<dbReference type="GO" id="GO:0046872">
    <property type="term" value="F:metal ion binding"/>
    <property type="evidence" value="ECO:0007669"/>
    <property type="project" value="UniProtKB-KW"/>
</dbReference>
<dbReference type="GO" id="GO:0019843">
    <property type="term" value="F:rRNA binding"/>
    <property type="evidence" value="ECO:0007669"/>
    <property type="project" value="UniProtKB-KW"/>
</dbReference>
<dbReference type="GO" id="GO:0003735">
    <property type="term" value="F:structural constituent of ribosome"/>
    <property type="evidence" value="ECO:0007669"/>
    <property type="project" value="InterPro"/>
</dbReference>
<dbReference type="GO" id="GO:0006412">
    <property type="term" value="P:translation"/>
    <property type="evidence" value="ECO:0007669"/>
    <property type="project" value="UniProtKB-UniRule"/>
</dbReference>
<dbReference type="Gene3D" id="4.10.830.30">
    <property type="entry name" value="Ribosomal protein L31"/>
    <property type="match status" value="1"/>
</dbReference>
<dbReference type="HAMAP" id="MF_00501">
    <property type="entry name" value="Ribosomal_bL31_1"/>
    <property type="match status" value="1"/>
</dbReference>
<dbReference type="InterPro" id="IPR034704">
    <property type="entry name" value="Ribosomal_bL28/bL31-like_sf"/>
</dbReference>
<dbReference type="InterPro" id="IPR002150">
    <property type="entry name" value="Ribosomal_bL31"/>
</dbReference>
<dbReference type="InterPro" id="IPR027491">
    <property type="entry name" value="Ribosomal_bL31_A"/>
</dbReference>
<dbReference type="InterPro" id="IPR042105">
    <property type="entry name" value="Ribosomal_bL31_sf"/>
</dbReference>
<dbReference type="NCBIfam" id="TIGR00105">
    <property type="entry name" value="L31"/>
    <property type="match status" value="1"/>
</dbReference>
<dbReference type="NCBIfam" id="NF000612">
    <property type="entry name" value="PRK00019.1"/>
    <property type="match status" value="1"/>
</dbReference>
<dbReference type="NCBIfam" id="NF001809">
    <property type="entry name" value="PRK00528.1"/>
    <property type="match status" value="1"/>
</dbReference>
<dbReference type="PANTHER" id="PTHR33280">
    <property type="entry name" value="50S RIBOSOMAL PROTEIN L31, CHLOROPLASTIC"/>
    <property type="match status" value="1"/>
</dbReference>
<dbReference type="PANTHER" id="PTHR33280:SF1">
    <property type="entry name" value="LARGE RIBOSOMAL SUBUNIT PROTEIN BL31C"/>
    <property type="match status" value="1"/>
</dbReference>
<dbReference type="Pfam" id="PF01197">
    <property type="entry name" value="Ribosomal_L31"/>
    <property type="match status" value="1"/>
</dbReference>
<dbReference type="PRINTS" id="PR01249">
    <property type="entry name" value="RIBOSOMALL31"/>
</dbReference>
<dbReference type="SUPFAM" id="SSF143800">
    <property type="entry name" value="L28p-like"/>
    <property type="match status" value="1"/>
</dbReference>
<dbReference type="PROSITE" id="PS01143">
    <property type="entry name" value="RIBOSOMAL_L31"/>
    <property type="match status" value="1"/>
</dbReference>
<reference key="1">
    <citation type="journal article" date="2005" name="Proc. Natl. Acad. Sci. U.S.A.">
        <title>The complete genome sequence of Mycobacterium avium subspecies paratuberculosis.</title>
        <authorList>
            <person name="Li L."/>
            <person name="Bannantine J.P."/>
            <person name="Zhang Q."/>
            <person name="Amonsin A."/>
            <person name="May B.J."/>
            <person name="Alt D."/>
            <person name="Banerji N."/>
            <person name="Kanjilal S."/>
            <person name="Kapur V."/>
        </authorList>
    </citation>
    <scope>NUCLEOTIDE SEQUENCE [LARGE SCALE GENOMIC DNA]</scope>
    <source>
        <strain>ATCC BAA-968 / K-10</strain>
    </source>
</reference>
<evidence type="ECO:0000255" key="1">
    <source>
        <dbReference type="HAMAP-Rule" id="MF_00501"/>
    </source>
</evidence>
<evidence type="ECO:0000305" key="2"/>
<sequence>MKADIHPTYAETTVLCGCGNTFQTRSTKDGGRIVVEVCSQCHPFYTGKQKILDSGGRVARFEKRYGKRKAGAEKAESADK</sequence>
<keyword id="KW-0479">Metal-binding</keyword>
<keyword id="KW-1185">Reference proteome</keyword>
<keyword id="KW-0687">Ribonucleoprotein</keyword>
<keyword id="KW-0689">Ribosomal protein</keyword>
<keyword id="KW-0694">RNA-binding</keyword>
<keyword id="KW-0699">rRNA-binding</keyword>
<keyword id="KW-0862">Zinc</keyword>
<comment type="function">
    <text evidence="1">Binds the 23S rRNA.</text>
</comment>
<comment type="cofactor">
    <cofactor evidence="1">
        <name>Zn(2+)</name>
        <dbReference type="ChEBI" id="CHEBI:29105"/>
    </cofactor>
    <text evidence="1">Binds 1 zinc ion per subunit.</text>
</comment>
<comment type="subunit">
    <text evidence="1">Part of the 50S ribosomal subunit.</text>
</comment>
<comment type="similarity">
    <text evidence="1">Belongs to the bacterial ribosomal protein bL31 family. Type A subfamily.</text>
</comment>
<feature type="chain" id="PRO_0000173129" description="Large ribosomal subunit protein bL31">
    <location>
        <begin position="1"/>
        <end position="80"/>
    </location>
</feature>
<feature type="binding site" evidence="1">
    <location>
        <position position="16"/>
    </location>
    <ligand>
        <name>Zn(2+)</name>
        <dbReference type="ChEBI" id="CHEBI:29105"/>
    </ligand>
</feature>
<feature type="binding site" evidence="1">
    <location>
        <position position="18"/>
    </location>
    <ligand>
        <name>Zn(2+)</name>
        <dbReference type="ChEBI" id="CHEBI:29105"/>
    </ligand>
</feature>
<feature type="binding site" evidence="1">
    <location>
        <position position="38"/>
    </location>
    <ligand>
        <name>Zn(2+)</name>
        <dbReference type="ChEBI" id="CHEBI:29105"/>
    </ligand>
</feature>
<feature type="binding site" evidence="1">
    <location>
        <position position="41"/>
    </location>
    <ligand>
        <name>Zn(2+)</name>
        <dbReference type="ChEBI" id="CHEBI:29105"/>
    </ligand>
</feature>